<keyword id="KW-0021">Allosteric enzyme</keyword>
<keyword id="KW-0035">Amyloplast</keyword>
<keyword id="KW-0067">ATP-binding</keyword>
<keyword id="KW-0150">Chloroplast</keyword>
<keyword id="KW-0547">Nucleotide-binding</keyword>
<keyword id="KW-0548">Nucleotidyltransferase</keyword>
<keyword id="KW-0934">Plastid</keyword>
<keyword id="KW-1185">Reference proteome</keyword>
<keyword id="KW-0750">Starch biosynthesis</keyword>
<keyword id="KW-0808">Transferase</keyword>
<keyword id="KW-0809">Transit peptide</keyword>
<comment type="function">
    <text evidence="3">Involved in synthesis of starch. Catalyzes the synthesis of ADP-glucose, a molecule that serves as an activated glycosyl donor for alpha-1,4-glucan synthesis. Essential for starch synthesis in leaf chloroplasts and endosperm amyloplasts.</text>
</comment>
<comment type="catalytic activity">
    <reaction evidence="7">
        <text>alpha-D-glucose 1-phosphate + ATP + H(+) = ADP-alpha-D-glucose + diphosphate</text>
        <dbReference type="Rhea" id="RHEA:12120"/>
        <dbReference type="ChEBI" id="CHEBI:15378"/>
        <dbReference type="ChEBI" id="CHEBI:30616"/>
        <dbReference type="ChEBI" id="CHEBI:33019"/>
        <dbReference type="ChEBI" id="CHEBI:57498"/>
        <dbReference type="ChEBI" id="CHEBI:58601"/>
        <dbReference type="EC" id="2.7.7.27"/>
    </reaction>
</comment>
<comment type="activity regulation">
    <text evidence="7">Activated by 3'phosphoglycerate, inhibited by orthophosphate. Allosteric regulation.</text>
</comment>
<comment type="pathway">
    <text evidence="6">Glycan biosynthesis; starch biosynthesis.</text>
</comment>
<comment type="subunit">
    <text evidence="7">Heterotetramer composed of two small and two large subunits.</text>
</comment>
<comment type="subcellular location">
    <subcellularLocation>
        <location evidence="3">Plastid</location>
        <location evidence="3">Chloroplast</location>
    </subcellularLocation>
    <subcellularLocation>
        <location evidence="3">Plastid</location>
        <location evidence="3">Amyloplast</location>
    </subcellularLocation>
</comment>
<comment type="tissue specificity">
    <text evidence="2">Expressed in leaves and stems.</text>
</comment>
<comment type="developmental stage">
    <text evidence="2">Expressed in developing seeds from 10 to 12 days after flowering (DAF).</text>
</comment>
<comment type="similarity">
    <text evidence="6">Belongs to the bacterial/plant glucose-1-phosphate adenylyltransferase family.</text>
</comment>
<accession>Q6AVT2</accession>
<name>GLGL1_ORYSJ</name>
<organism>
    <name type="scientific">Oryza sativa subsp. japonica</name>
    <name type="common">Rice</name>
    <dbReference type="NCBI Taxonomy" id="39947"/>
    <lineage>
        <taxon>Eukaryota</taxon>
        <taxon>Viridiplantae</taxon>
        <taxon>Streptophyta</taxon>
        <taxon>Embryophyta</taxon>
        <taxon>Tracheophyta</taxon>
        <taxon>Spermatophyta</taxon>
        <taxon>Magnoliopsida</taxon>
        <taxon>Liliopsida</taxon>
        <taxon>Poales</taxon>
        <taxon>Poaceae</taxon>
        <taxon>BOP clade</taxon>
        <taxon>Oryzoideae</taxon>
        <taxon>Oryzeae</taxon>
        <taxon>Oryzinae</taxon>
        <taxon>Oryza</taxon>
        <taxon>Oryza sativa</taxon>
    </lineage>
</organism>
<sequence>MAAMDLRVAAPASVAAAARCGTSLARPWPARAVGGGGGGGGRGRRLSVRTSVATTEAAAAAVGASEDAALEARDSKTVVAVILGGGAGTRLFPLTKRRAKPAVPIGGAYRLIDVPMSNCINSGINKVYILTQFNSASLNRHLSRAYNFSNGVAFGDGFVEVLAATQTPGSEGKRWFQGTADAVRQFDWLFDDAKAKDIDDVLILSGDHLYRMDYMDFVQSHRQRGADISICCLPIDDSRASDFGLMKIDDTGRVIAFSEKPKGDDLKAMQVDTTVLGLPQDEAKEKPYIASMGVYIFKKEILLNLLRWRFPTANDFGSEIIPASAKEINVKAYLFNDYWEDIGTIKSFFEANLSLAEQPPRFSFYDANKPMYTSRRNLPPSMINNSKITDSIISHGCFLDSCRIEHSVVGIRSRIGSNVHLKDTVMLGADFYETDLERGELLAEGKVPIGIGENTKIQNCIIDKNARIGKNVTISNSEGVQEADRTSEGFYIRSGITIVLKNSIIADGLVI</sequence>
<dbReference type="EC" id="2.7.7.27" evidence="7"/>
<dbReference type="EMBL" id="KT199366">
    <property type="protein sequence ID" value="ALC78406.1"/>
    <property type="molecule type" value="mRNA"/>
</dbReference>
<dbReference type="EMBL" id="AC096689">
    <property type="protein sequence ID" value="AAT78793.1"/>
    <property type="molecule type" value="Genomic_DNA"/>
</dbReference>
<dbReference type="EMBL" id="DP000009">
    <property type="protein sequence ID" value="ABF98731.1"/>
    <property type="molecule type" value="Genomic_DNA"/>
</dbReference>
<dbReference type="EMBL" id="AP008209">
    <property type="protein sequence ID" value="BAF13098.1"/>
    <property type="molecule type" value="Genomic_DNA"/>
</dbReference>
<dbReference type="EMBL" id="AP014959">
    <property type="protein sequence ID" value="BAS86250.1"/>
    <property type="molecule type" value="Genomic_DNA"/>
</dbReference>
<dbReference type="EMBL" id="AK069296">
    <property type="protein sequence ID" value="BAG91362.1"/>
    <property type="molecule type" value="mRNA"/>
</dbReference>
<dbReference type="RefSeq" id="XP_015632018.1">
    <property type="nucleotide sequence ID" value="XM_015776532.1"/>
</dbReference>
<dbReference type="SMR" id="Q6AVT2"/>
<dbReference type="FunCoup" id="Q6AVT2">
    <property type="interactions" value="838"/>
</dbReference>
<dbReference type="STRING" id="39947.Q6AVT2"/>
<dbReference type="PaxDb" id="39947-Q6AVT2"/>
<dbReference type="EnsemblPlants" id="Os03t0735000-01">
    <property type="protein sequence ID" value="Os03t0735000-01"/>
    <property type="gene ID" value="Os03g0735000"/>
</dbReference>
<dbReference type="Gramene" id="Os03t0735000-01">
    <property type="protein sequence ID" value="Os03t0735000-01"/>
    <property type="gene ID" value="Os03g0735000"/>
</dbReference>
<dbReference type="KEGG" id="dosa:Os03g0735000"/>
<dbReference type="eggNOG" id="KOG1322">
    <property type="taxonomic scope" value="Eukaryota"/>
</dbReference>
<dbReference type="HOGENOM" id="CLU_029499_14_4_1"/>
<dbReference type="InParanoid" id="Q6AVT2"/>
<dbReference type="OMA" id="YRMDFSQ"/>
<dbReference type="OrthoDB" id="1733332at2759"/>
<dbReference type="BRENDA" id="2.7.7.27">
    <property type="organism ID" value="4460"/>
</dbReference>
<dbReference type="PlantReactome" id="R-OSA-1119477">
    <property type="pathway name" value="Starch biosynthesis"/>
</dbReference>
<dbReference type="UniPathway" id="UPA00152"/>
<dbReference type="Proteomes" id="UP000000763">
    <property type="component" value="Chromosome 3"/>
</dbReference>
<dbReference type="Proteomes" id="UP000059680">
    <property type="component" value="Chromosome 3"/>
</dbReference>
<dbReference type="ExpressionAtlas" id="Q6AVT2">
    <property type="expression patterns" value="baseline and differential"/>
</dbReference>
<dbReference type="GO" id="GO:0009501">
    <property type="term" value="C:amyloplast"/>
    <property type="evidence" value="ECO:0007669"/>
    <property type="project" value="UniProtKB-SubCell"/>
</dbReference>
<dbReference type="GO" id="GO:0009507">
    <property type="term" value="C:chloroplast"/>
    <property type="evidence" value="ECO:0007669"/>
    <property type="project" value="UniProtKB-SubCell"/>
</dbReference>
<dbReference type="GO" id="GO:0005524">
    <property type="term" value="F:ATP binding"/>
    <property type="evidence" value="ECO:0007669"/>
    <property type="project" value="UniProtKB-KW"/>
</dbReference>
<dbReference type="GO" id="GO:0008878">
    <property type="term" value="F:glucose-1-phosphate adenylyltransferase activity"/>
    <property type="evidence" value="ECO:0007669"/>
    <property type="project" value="UniProtKB-EC"/>
</dbReference>
<dbReference type="GO" id="GO:0005978">
    <property type="term" value="P:glycogen biosynthetic process"/>
    <property type="evidence" value="ECO:0007669"/>
    <property type="project" value="InterPro"/>
</dbReference>
<dbReference type="GO" id="GO:0019252">
    <property type="term" value="P:starch biosynthetic process"/>
    <property type="evidence" value="ECO:0007669"/>
    <property type="project" value="UniProtKB-UniPathway"/>
</dbReference>
<dbReference type="CDD" id="cd02508">
    <property type="entry name" value="ADP_Glucose_PP"/>
    <property type="match status" value="1"/>
</dbReference>
<dbReference type="CDD" id="cd04651">
    <property type="entry name" value="LbH_G1P_AT_C"/>
    <property type="match status" value="1"/>
</dbReference>
<dbReference type="FunFam" id="3.90.550.10:FF:000030">
    <property type="entry name" value="Glucose-1-phosphate adenylyltransferase"/>
    <property type="match status" value="1"/>
</dbReference>
<dbReference type="Gene3D" id="2.160.10.10">
    <property type="entry name" value="Hexapeptide repeat proteins"/>
    <property type="match status" value="1"/>
</dbReference>
<dbReference type="Gene3D" id="3.90.550.10">
    <property type="entry name" value="Spore Coat Polysaccharide Biosynthesis Protein SpsA, Chain A"/>
    <property type="match status" value="1"/>
</dbReference>
<dbReference type="InterPro" id="IPR011831">
    <property type="entry name" value="ADP-Glc_PPase"/>
</dbReference>
<dbReference type="InterPro" id="IPR005836">
    <property type="entry name" value="ADP_Glu_pyroP_CS"/>
</dbReference>
<dbReference type="InterPro" id="IPR005835">
    <property type="entry name" value="NTP_transferase_dom"/>
</dbReference>
<dbReference type="InterPro" id="IPR029044">
    <property type="entry name" value="Nucleotide-diphossugar_trans"/>
</dbReference>
<dbReference type="InterPro" id="IPR011004">
    <property type="entry name" value="Trimer_LpxA-like_sf"/>
</dbReference>
<dbReference type="NCBIfam" id="TIGR02091">
    <property type="entry name" value="glgC"/>
    <property type="match status" value="1"/>
</dbReference>
<dbReference type="NCBIfam" id="NF002772">
    <property type="entry name" value="PRK02862.1"/>
    <property type="match status" value="1"/>
</dbReference>
<dbReference type="PANTHER" id="PTHR43523:SF12">
    <property type="entry name" value="GLUCOSE-1-PHOSPHATE ADENYLYLTRANSFERASE LARGE SUBUNIT 1, CHLOROPLASTIC-RELATED"/>
    <property type="match status" value="1"/>
</dbReference>
<dbReference type="PANTHER" id="PTHR43523">
    <property type="entry name" value="GLUCOSE-1-PHOSPHATE ADENYLYLTRANSFERASE-RELATED"/>
    <property type="match status" value="1"/>
</dbReference>
<dbReference type="Pfam" id="PF25247">
    <property type="entry name" value="LbH_GLGC"/>
    <property type="match status" value="1"/>
</dbReference>
<dbReference type="Pfam" id="PF00483">
    <property type="entry name" value="NTP_transferase"/>
    <property type="match status" value="1"/>
</dbReference>
<dbReference type="SUPFAM" id="SSF53448">
    <property type="entry name" value="Nucleotide-diphospho-sugar transferases"/>
    <property type="match status" value="1"/>
</dbReference>
<dbReference type="SUPFAM" id="SSF51161">
    <property type="entry name" value="Trimeric LpxA-like enzymes"/>
    <property type="match status" value="1"/>
</dbReference>
<dbReference type="PROSITE" id="PS00808">
    <property type="entry name" value="ADP_GLC_PYROPHOSPH_1"/>
    <property type="match status" value="1"/>
</dbReference>
<dbReference type="PROSITE" id="PS00809">
    <property type="entry name" value="ADP_GLC_PYROPHOSPH_2"/>
    <property type="match status" value="1"/>
</dbReference>
<dbReference type="PROSITE" id="PS00810">
    <property type="entry name" value="ADP_GLC_PYROPHOSPH_3"/>
    <property type="match status" value="1"/>
</dbReference>
<feature type="transit peptide" description="Chloroplast" evidence="1">
    <location>
        <begin position="1"/>
        <end position="58"/>
    </location>
</feature>
<feature type="chain" id="PRO_0000441124" description="Glucose-1-phosphate adenylyltransferase large subunit 1, chloroplastic/amyloplastic" evidence="1">
    <location>
        <begin position="59"/>
        <end position="511"/>
    </location>
</feature>
<proteinExistence type="evidence at protein level"/>
<gene>
    <name evidence="5" type="primary">AGPL1</name>
    <name evidence="4" type="synonym">APL1</name>
    <name evidence="10" type="ordered locus">Os03g0735000</name>
    <name evidence="9" type="ordered locus">LOC_Os03g52460</name>
    <name evidence="8" type="ORF">OSJNBa0027J18.8</name>
</gene>
<reference key="1">
    <citation type="submission" date="2015-06" db="EMBL/GenBank/DDBJ databases">
        <title>Structural and expression analysis of immature seed genes in Oryza sativa L.</title>
        <authorList>
            <person name="Yoon U.-H."/>
            <person name="Hahn J.-H."/>
        </authorList>
    </citation>
    <scope>NUCLEOTIDE SEQUENCE [MRNA]</scope>
    <source>
        <strain>cv. Ilpoombyeo</strain>
    </source>
</reference>
<reference key="2">
    <citation type="journal article" date="2005" name="Genome Res.">
        <title>Sequence, annotation, and analysis of synteny between rice chromosome 3 and diverged grass species.</title>
        <authorList>
            <consortium name="The rice chromosome 3 sequencing consortium"/>
            <person name="Buell C.R."/>
            <person name="Yuan Q."/>
            <person name="Ouyang S."/>
            <person name="Liu J."/>
            <person name="Zhu W."/>
            <person name="Wang A."/>
            <person name="Maiti R."/>
            <person name="Haas B."/>
            <person name="Wortman J."/>
            <person name="Pertea M."/>
            <person name="Jones K.M."/>
            <person name="Kim M."/>
            <person name="Overton L."/>
            <person name="Tsitrin T."/>
            <person name="Fadrosh D."/>
            <person name="Bera J."/>
            <person name="Weaver B."/>
            <person name="Jin S."/>
            <person name="Johri S."/>
            <person name="Reardon M."/>
            <person name="Webb K."/>
            <person name="Hill J."/>
            <person name="Moffat K."/>
            <person name="Tallon L."/>
            <person name="Van Aken S."/>
            <person name="Lewis M."/>
            <person name="Utterback T."/>
            <person name="Feldblyum T."/>
            <person name="Zismann V."/>
            <person name="Iobst S."/>
            <person name="Hsiao J."/>
            <person name="de Vazeille A.R."/>
            <person name="Salzberg S.L."/>
            <person name="White O."/>
            <person name="Fraser C.M."/>
            <person name="Yu Y."/>
            <person name="Kim H."/>
            <person name="Rambo T."/>
            <person name="Currie J."/>
            <person name="Collura K."/>
            <person name="Kernodle-Thompson S."/>
            <person name="Wei F."/>
            <person name="Kudrna K."/>
            <person name="Ammiraju J.S.S."/>
            <person name="Luo M."/>
            <person name="Goicoechea J.L."/>
            <person name="Wing R.A."/>
            <person name="Henry D."/>
            <person name="Oates R."/>
            <person name="Palmer M."/>
            <person name="Pries G."/>
            <person name="Saski C."/>
            <person name="Simmons J."/>
            <person name="Soderlund C."/>
            <person name="Nelson W."/>
            <person name="de la Bastide M."/>
            <person name="Spiegel L."/>
            <person name="Nascimento L."/>
            <person name="Huang E."/>
            <person name="Preston R."/>
            <person name="Zutavern T."/>
            <person name="Palmer L."/>
            <person name="O'Shaughnessy A."/>
            <person name="Dike S."/>
            <person name="McCombie W.R."/>
            <person name="Minx P."/>
            <person name="Cordum H."/>
            <person name="Wilson R."/>
            <person name="Jin W."/>
            <person name="Lee H.R."/>
            <person name="Jiang J."/>
            <person name="Jackson S."/>
        </authorList>
    </citation>
    <scope>NUCLEOTIDE SEQUENCE [LARGE SCALE GENOMIC DNA]</scope>
    <source>
        <strain>cv. Nipponbare</strain>
    </source>
</reference>
<reference key="3">
    <citation type="journal article" date="2005" name="Nature">
        <title>The map-based sequence of the rice genome.</title>
        <authorList>
            <consortium name="International rice genome sequencing project (IRGSP)"/>
        </authorList>
    </citation>
    <scope>NUCLEOTIDE SEQUENCE [LARGE SCALE GENOMIC DNA]</scope>
    <source>
        <strain>cv. Nipponbare</strain>
    </source>
</reference>
<reference key="4">
    <citation type="journal article" date="2008" name="Nucleic Acids Res.">
        <title>The rice annotation project database (RAP-DB): 2008 update.</title>
        <authorList>
            <consortium name="The rice annotation project (RAP)"/>
        </authorList>
    </citation>
    <scope>GENOME REANNOTATION</scope>
    <source>
        <strain>cv. Nipponbare</strain>
    </source>
</reference>
<reference key="5">
    <citation type="journal article" date="2013" name="Rice">
        <title>Improvement of the Oryza sativa Nipponbare reference genome using next generation sequence and optical map data.</title>
        <authorList>
            <person name="Kawahara Y."/>
            <person name="de la Bastide M."/>
            <person name="Hamilton J.P."/>
            <person name="Kanamori H."/>
            <person name="McCombie W.R."/>
            <person name="Ouyang S."/>
            <person name="Schwartz D.C."/>
            <person name="Tanaka T."/>
            <person name="Wu J."/>
            <person name="Zhou S."/>
            <person name="Childs K.L."/>
            <person name="Davidson R.M."/>
            <person name="Lin H."/>
            <person name="Quesada-Ocampo L."/>
            <person name="Vaillancourt B."/>
            <person name="Sakai H."/>
            <person name="Lee S.S."/>
            <person name="Kim J."/>
            <person name="Numa H."/>
            <person name="Itoh T."/>
            <person name="Buell C.R."/>
            <person name="Matsumoto T."/>
        </authorList>
    </citation>
    <scope>GENOME REANNOTATION</scope>
    <source>
        <strain>cv. Nipponbare</strain>
    </source>
</reference>
<reference key="6">
    <citation type="journal article" date="2003" name="Science">
        <title>Collection, mapping, and annotation of over 28,000 cDNA clones from japonica rice.</title>
        <authorList>
            <consortium name="The rice full-length cDNA consortium"/>
        </authorList>
    </citation>
    <scope>NUCLEOTIDE SEQUENCE [LARGE SCALE MRNA]</scope>
    <source>
        <strain>cv. Nipponbare</strain>
    </source>
</reference>
<reference key="7">
    <citation type="journal article" date="2005" name="Plant Cell Physiol.">
        <title>Gene expression of ADP-glucose pyrophosphorylase and starch contents in rice cultured cells are cooperatively regulated by sucrose and ABA.</title>
        <authorList>
            <person name="Akihiro T."/>
            <person name="Mizuno K."/>
            <person name="Fujimura T."/>
        </authorList>
    </citation>
    <scope>TISSUE SPECIFICITY</scope>
    <scope>DEVELOPMENTAL STAGE</scope>
</reference>
<reference key="8">
    <citation type="journal article" date="2007" name="Plant Mol. Biol.">
        <title>Identification of the ADP-glucose pyrophosphorylase isoforms essential for starch synthesis in the leaf and seed endosperm of rice (Oryza sativa L.).</title>
        <authorList>
            <person name="Lee S.K."/>
            <person name="Hwang S.K."/>
            <person name="Han M."/>
            <person name="Eom J.S."/>
            <person name="Kang H.G."/>
            <person name="Han Y."/>
            <person name="Choi S.B."/>
            <person name="Cho M.H."/>
            <person name="Bhoo S.H."/>
            <person name="An G."/>
            <person name="Hahn T.R."/>
            <person name="Okita T.W."/>
            <person name="Jeon J.S."/>
        </authorList>
    </citation>
    <scope>FUNCTION</scope>
    <scope>CATALYTIC ACTIVITY</scope>
    <scope>ACTIVITY REGULATION</scope>
    <scope>SUBUNIT</scope>
    <scope>SUBCELLULAR LOCATION</scope>
</reference>
<protein>
    <recommendedName>
        <fullName evidence="6">Glucose-1-phosphate adenylyltransferase large subunit 1, chloroplastic/amyloplastic</fullName>
        <shortName evidence="5">OsAGPL1</shortName>
        <shortName evidence="4">OsAPL1</shortName>
        <ecNumber evidence="7">2.7.7.27</ecNumber>
    </recommendedName>
    <alternativeName>
        <fullName evidence="6">ADP-glucose pyrophosphorylase AGPL1</fullName>
    </alternativeName>
    <alternativeName>
        <fullName evidence="6">ADP-glucose synthase AGPL1</fullName>
    </alternativeName>
</protein>
<evidence type="ECO:0000255" key="1"/>
<evidence type="ECO:0000269" key="2">
    <source>
    </source>
</evidence>
<evidence type="ECO:0000269" key="3">
    <source>
    </source>
</evidence>
<evidence type="ECO:0000303" key="4">
    <source>
    </source>
</evidence>
<evidence type="ECO:0000303" key="5">
    <source>
    </source>
</evidence>
<evidence type="ECO:0000305" key="6"/>
<evidence type="ECO:0000305" key="7">
    <source>
    </source>
</evidence>
<evidence type="ECO:0000312" key="8">
    <source>
        <dbReference type="EMBL" id="AAT78793.1"/>
    </source>
</evidence>
<evidence type="ECO:0000312" key="9">
    <source>
        <dbReference type="EMBL" id="ABF98731.1"/>
    </source>
</evidence>
<evidence type="ECO:0000312" key="10">
    <source>
        <dbReference type="EMBL" id="BAF13098.1"/>
    </source>
</evidence>